<evidence type="ECO:0000255" key="1"/>
<evidence type="ECO:0000255" key="2">
    <source>
        <dbReference type="PROSITE-ProRule" id="PRU00176"/>
    </source>
</evidence>
<evidence type="ECO:0000256" key="3">
    <source>
        <dbReference type="SAM" id="MobiDB-lite"/>
    </source>
</evidence>
<evidence type="ECO:0000269" key="4">
    <source>
    </source>
</evidence>
<evidence type="ECO:0000269" key="5">
    <source>
    </source>
</evidence>
<evidence type="ECO:0000305" key="6"/>
<accession>Q0WMY5</accession>
<accession>Q944Q3</accession>
<accession>Q9FMC9</accession>
<accession>Q9LZ16</accession>
<name>PP365_ARATH</name>
<sequence>MDNGGSVLSLSAPHFPYSATILRRHSPVASISFSLKQPPPQPPEPPESPPDLRRPEKSIGSSSSSSSPSPIPSPKTPLKINPLKGLTNRSSVSPLVQSEVSSKVSSFGSSLASKLRLSSKLSPPPPPPPPPPVEETTQFRDEFRSDTKPPEEETRNPQQEFRQEGKIFVGNLPTWIKKPEFEEFFRQFGPIENVILIKGHHEVEKNAGFGFIIYAAEKSAMKAVEFDGVEFHGRILTVKLDDGKRLKTKAEQRVRWVEEGEEDTKMSNKSSWHQEREGSRKSLQRILDTNGDNWQAVISAFEKISKPSRTEFGLMVKFYGRRGDMHRARETFERMRARGITPTSRIYTSLIHAYAVGRDMDEALSCVRKMKEEGIEMSLVTYSVIVGGFSKAGHAEAADYWFDEAKRIHKTLNASIYGKIIYAHCQTCNMERAEALVREMEEEGIDAPIAIYHTMMDGYTMVADEKKGLVVFKRLKECGFTPTVVTYGCLINLYTKVGKISKALEVSRVMKEEGVKHNLKTYSMMINGFVKLKDWANAFAVFEDMVKEGMKPDVILYNNIISAFCGMGNMDRAIQTVKEMQKLRHRPTTRTFMPIIHGYAKSGDMRRSLEVFDMMRRCGCVPTVHTFNGLINGLVEKRQMEKAVEILDEMTLAGVSANEHTYTKIMQGYASVGDTGKAFEYFTRLQNEGLDVDIFTYEALLKACCKSGRMQSALAVTKEMSARNIPRNSFVYNILIDGWARRGDVWEAADLIQQMKKEGVKPDIHTYTSFISACSKAGDMNRATQTIEEMEALGVKPNIKTYTTLIKGWARASLPEKALSCYEEMKAMGIKPDKAVYHCLLTSLLSRASIAEAYIYSGVMTICKEMVEAGLIVDMGTAVHWSKCLCKIEASGGELTETLQKTFPPDWSSHHHHHGFLDQVSDVDSDEDDVDGEDGEDDEDVNSVSDLLSPYK</sequence>
<comment type="function">
    <text evidence="4">May play a role in the plastid ribosome biogenesis.</text>
</comment>
<comment type="subcellular location">
    <subcellularLocation>
        <location evidence="5">Plastid</location>
        <location evidence="5">Chloroplast</location>
    </subcellularLocation>
</comment>
<comment type="similarity">
    <text evidence="6">Belongs to the PPR family. P subfamily.</text>
</comment>
<comment type="sequence caution" evidence="6">
    <conflict type="frameshift">
        <sequence resource="EMBL-CDS" id="AAL11611"/>
    </conflict>
</comment>
<comment type="sequence caution" evidence="6">
    <conflict type="erroneous gene model prediction">
        <sequence resource="EMBL-CDS" id="BAB08985"/>
    </conflict>
</comment>
<comment type="sequence caution" evidence="6">
    <conflict type="erroneous gene model prediction">
        <sequence resource="EMBL-CDS" id="CAB86023"/>
    </conflict>
</comment>
<comment type="online information" name="Pentatricopeptide repeat proteins">
    <link uri="https://ppr.plantenergy.uwa.edu.au"/>
</comment>
<dbReference type="EMBL" id="AB008271">
    <property type="protein sequence ID" value="BAB08985.1"/>
    <property type="status" value="ALT_SEQ"/>
    <property type="molecule type" value="Genomic_DNA"/>
</dbReference>
<dbReference type="EMBL" id="AL162972">
    <property type="protein sequence ID" value="CAB86023.1"/>
    <property type="status" value="ALT_SEQ"/>
    <property type="molecule type" value="Genomic_DNA"/>
</dbReference>
<dbReference type="EMBL" id="CP002688">
    <property type="protein sequence ID" value="AED90789.1"/>
    <property type="molecule type" value="Genomic_DNA"/>
</dbReference>
<dbReference type="EMBL" id="AF424618">
    <property type="protein sequence ID" value="AAL11611.1"/>
    <property type="status" value="ALT_FRAME"/>
    <property type="molecule type" value="mRNA"/>
</dbReference>
<dbReference type="EMBL" id="AK229672">
    <property type="protein sequence ID" value="BAF01515.1"/>
    <property type="molecule type" value="mRNA"/>
</dbReference>
<dbReference type="PIR" id="T48477">
    <property type="entry name" value="T48477"/>
</dbReference>
<dbReference type="RefSeq" id="NP_568141.2">
    <property type="nucleotide sequence ID" value="NM_120563.5"/>
</dbReference>
<dbReference type="SMR" id="Q0WMY5"/>
<dbReference type="FunCoup" id="Q0WMY5">
    <property type="interactions" value="1131"/>
</dbReference>
<dbReference type="STRING" id="3702.Q0WMY5"/>
<dbReference type="iPTMnet" id="Q0WMY5"/>
<dbReference type="PaxDb" id="3702-AT5G04810.1"/>
<dbReference type="ProteomicsDB" id="249255"/>
<dbReference type="EnsemblPlants" id="AT5G04810.1">
    <property type="protein sequence ID" value="AT5G04810.1"/>
    <property type="gene ID" value="AT5G04810"/>
</dbReference>
<dbReference type="GeneID" id="830360"/>
<dbReference type="Gramene" id="AT5G04810.1">
    <property type="protein sequence ID" value="AT5G04810.1"/>
    <property type="gene ID" value="AT5G04810"/>
</dbReference>
<dbReference type="KEGG" id="ath:AT5G04810"/>
<dbReference type="Araport" id="AT5G04810"/>
<dbReference type="TAIR" id="AT5G04810">
    <property type="gene designation" value="PPR4"/>
</dbReference>
<dbReference type="eggNOG" id="KOG4197">
    <property type="taxonomic scope" value="Eukaryota"/>
</dbReference>
<dbReference type="HOGENOM" id="CLU_011727_0_0_1"/>
<dbReference type="InParanoid" id="Q0WMY5"/>
<dbReference type="OrthoDB" id="185373at2759"/>
<dbReference type="PhylomeDB" id="Q0WMY5"/>
<dbReference type="PRO" id="PR:Q0WMY5"/>
<dbReference type="Proteomes" id="UP000006548">
    <property type="component" value="Chromosome 5"/>
</dbReference>
<dbReference type="ExpressionAtlas" id="Q0WMY5">
    <property type="expression patterns" value="baseline and differential"/>
</dbReference>
<dbReference type="GO" id="GO:0009507">
    <property type="term" value="C:chloroplast"/>
    <property type="evidence" value="ECO:0007005"/>
    <property type="project" value="TAIR"/>
</dbReference>
<dbReference type="GO" id="GO:0003729">
    <property type="term" value="F:mRNA binding"/>
    <property type="evidence" value="ECO:0000314"/>
    <property type="project" value="TAIR"/>
</dbReference>
<dbReference type="GO" id="GO:0009880">
    <property type="term" value="P:embryonic pattern specification"/>
    <property type="evidence" value="ECO:0000314"/>
    <property type="project" value="TAIR"/>
</dbReference>
<dbReference type="GO" id="GO:0048366">
    <property type="term" value="P:leaf development"/>
    <property type="evidence" value="ECO:0000314"/>
    <property type="project" value="TAIR"/>
</dbReference>
<dbReference type="GO" id="GO:0008380">
    <property type="term" value="P:RNA splicing"/>
    <property type="evidence" value="ECO:0000315"/>
    <property type="project" value="TAIR"/>
</dbReference>
<dbReference type="CDD" id="cd00590">
    <property type="entry name" value="RRM_SF"/>
    <property type="match status" value="1"/>
</dbReference>
<dbReference type="FunFam" id="1.25.40.10:FF:002062">
    <property type="entry name" value="Pentatricopeptide (PPR) repeat-containing protein"/>
    <property type="match status" value="1"/>
</dbReference>
<dbReference type="FunFam" id="1.25.40.10:FF:002527">
    <property type="entry name" value="Pentatricopeptide (PPR) repeat-containing protein"/>
    <property type="match status" value="1"/>
</dbReference>
<dbReference type="FunFam" id="3.30.70.330:FF:001463">
    <property type="entry name" value="Pentatricopeptide (PPR) repeat-containing protein"/>
    <property type="match status" value="1"/>
</dbReference>
<dbReference type="FunFam" id="1.25.40.10:FF:001383">
    <property type="entry name" value="Pentatricopeptide repeat-containing protein mitochondrial"/>
    <property type="match status" value="1"/>
</dbReference>
<dbReference type="Gene3D" id="3.30.70.330">
    <property type="match status" value="1"/>
</dbReference>
<dbReference type="Gene3D" id="1.25.40.10">
    <property type="entry name" value="Tetratricopeptide repeat domain"/>
    <property type="match status" value="7"/>
</dbReference>
<dbReference type="InterPro" id="IPR012677">
    <property type="entry name" value="Nucleotide-bd_a/b_plait_sf"/>
</dbReference>
<dbReference type="InterPro" id="IPR002885">
    <property type="entry name" value="Pentatricopeptide_rpt"/>
</dbReference>
<dbReference type="InterPro" id="IPR035979">
    <property type="entry name" value="RBD_domain_sf"/>
</dbReference>
<dbReference type="InterPro" id="IPR000504">
    <property type="entry name" value="RRM_dom"/>
</dbReference>
<dbReference type="InterPro" id="IPR011990">
    <property type="entry name" value="TPR-like_helical_dom_sf"/>
</dbReference>
<dbReference type="NCBIfam" id="TIGR00756">
    <property type="entry name" value="PPR"/>
    <property type="match status" value="14"/>
</dbReference>
<dbReference type="PANTHER" id="PTHR47447">
    <property type="entry name" value="OS03G0856100 PROTEIN"/>
    <property type="match status" value="1"/>
</dbReference>
<dbReference type="PANTHER" id="PTHR47447:SF24">
    <property type="entry name" value="PENTATRICOPEPTIDE REPEAT-CONTAINING PROTEIN"/>
    <property type="match status" value="1"/>
</dbReference>
<dbReference type="Pfam" id="PF01535">
    <property type="entry name" value="PPR"/>
    <property type="match status" value="3"/>
</dbReference>
<dbReference type="Pfam" id="PF12854">
    <property type="entry name" value="PPR_1"/>
    <property type="match status" value="1"/>
</dbReference>
<dbReference type="Pfam" id="PF13041">
    <property type="entry name" value="PPR_2"/>
    <property type="match status" value="5"/>
</dbReference>
<dbReference type="Pfam" id="PF13812">
    <property type="entry name" value="PPR_3"/>
    <property type="match status" value="1"/>
</dbReference>
<dbReference type="Pfam" id="PF00076">
    <property type="entry name" value="RRM_1"/>
    <property type="match status" value="1"/>
</dbReference>
<dbReference type="SMART" id="SM00360">
    <property type="entry name" value="RRM"/>
    <property type="match status" value="1"/>
</dbReference>
<dbReference type="SUPFAM" id="SSF81901">
    <property type="entry name" value="HCP-like"/>
    <property type="match status" value="1"/>
</dbReference>
<dbReference type="SUPFAM" id="SSF54928">
    <property type="entry name" value="RNA-binding domain, RBD"/>
    <property type="match status" value="1"/>
</dbReference>
<dbReference type="PROSITE" id="PS51375">
    <property type="entry name" value="PPR"/>
    <property type="match status" value="15"/>
</dbReference>
<dbReference type="PROSITE" id="PS50102">
    <property type="entry name" value="RRM"/>
    <property type="match status" value="1"/>
</dbReference>
<protein>
    <recommendedName>
        <fullName>Pentatricopeptide repeat-containing protein At5g04810, chloroplastic</fullName>
    </recommendedName>
    <alternativeName>
        <fullName>Maize PPR4 homolog</fullName>
        <shortName>AtPPR4</shortName>
    </alternativeName>
</protein>
<proteinExistence type="evidence at protein level"/>
<feature type="transit peptide" description="Chloroplast" evidence="1">
    <location>
        <begin position="1"/>
        <end position="60"/>
    </location>
</feature>
<feature type="chain" id="PRO_0000363502" description="Pentatricopeptide repeat-containing protein At5g04810, chloroplastic">
    <location>
        <begin position="61"/>
        <end position="952"/>
    </location>
</feature>
<feature type="domain" description="RRM" evidence="2">
    <location>
        <begin position="167"/>
        <end position="238"/>
    </location>
</feature>
<feature type="repeat" description="PPR 1">
    <location>
        <begin position="308"/>
        <end position="342"/>
    </location>
</feature>
<feature type="repeat" description="PPR 2">
    <location>
        <begin position="343"/>
        <end position="377"/>
    </location>
</feature>
<feature type="repeat" description="PPR 3">
    <location>
        <begin position="378"/>
        <end position="412"/>
    </location>
</feature>
<feature type="repeat" description="PPR 4">
    <location>
        <begin position="413"/>
        <end position="447"/>
    </location>
</feature>
<feature type="repeat" description="PPR 5">
    <location>
        <begin position="448"/>
        <end position="482"/>
    </location>
</feature>
<feature type="repeat" description="PPR 6">
    <location>
        <begin position="483"/>
        <end position="517"/>
    </location>
</feature>
<feature type="repeat" description="PPR 7">
    <location>
        <begin position="518"/>
        <end position="552"/>
    </location>
</feature>
<feature type="repeat" description="PPR 8">
    <location>
        <begin position="553"/>
        <end position="587"/>
    </location>
</feature>
<feature type="repeat" description="PPR 9">
    <location>
        <begin position="588"/>
        <end position="622"/>
    </location>
</feature>
<feature type="repeat" description="PPR 10">
    <location>
        <begin position="623"/>
        <end position="657"/>
    </location>
</feature>
<feature type="repeat" description="PPR 11">
    <location>
        <begin position="658"/>
        <end position="692"/>
    </location>
</feature>
<feature type="repeat" description="PPR 12">
    <location>
        <begin position="693"/>
        <end position="727"/>
    </location>
</feature>
<feature type="repeat" description="PPR 13">
    <location>
        <begin position="728"/>
        <end position="762"/>
    </location>
</feature>
<feature type="repeat" description="PPR 14">
    <location>
        <begin position="763"/>
        <end position="797"/>
    </location>
</feature>
<feature type="repeat" description="PPR 15">
    <location>
        <begin position="798"/>
        <end position="832"/>
    </location>
</feature>
<feature type="region of interest" description="Disordered" evidence="3">
    <location>
        <begin position="30"/>
        <end position="95"/>
    </location>
</feature>
<feature type="region of interest" description="Disordered" evidence="3">
    <location>
        <begin position="115"/>
        <end position="163"/>
    </location>
</feature>
<feature type="region of interest" description="Disordered" evidence="3">
    <location>
        <begin position="259"/>
        <end position="281"/>
    </location>
</feature>
<feature type="region of interest" description="Disordered" evidence="3">
    <location>
        <begin position="918"/>
        <end position="952"/>
    </location>
</feature>
<feature type="compositionally biased region" description="Pro residues" evidence="3">
    <location>
        <begin position="37"/>
        <end position="49"/>
    </location>
</feature>
<feature type="compositionally biased region" description="Low complexity" evidence="3">
    <location>
        <begin position="58"/>
        <end position="68"/>
    </location>
</feature>
<feature type="compositionally biased region" description="Pro residues" evidence="3">
    <location>
        <begin position="122"/>
        <end position="133"/>
    </location>
</feature>
<feature type="compositionally biased region" description="Basic and acidic residues" evidence="3">
    <location>
        <begin position="137"/>
        <end position="163"/>
    </location>
</feature>
<feature type="compositionally biased region" description="Basic and acidic residues" evidence="3">
    <location>
        <begin position="259"/>
        <end position="280"/>
    </location>
</feature>
<feature type="compositionally biased region" description="Acidic residues" evidence="3">
    <location>
        <begin position="921"/>
        <end position="941"/>
    </location>
</feature>
<reference key="1">
    <citation type="journal article" date="1997" name="DNA Res.">
        <title>Structural analysis of Arabidopsis thaliana chromosome 5. III. Sequence features of the regions of 1,191,918 bp covered by seventeen physically assigned P1 clones.</title>
        <authorList>
            <person name="Nakamura Y."/>
            <person name="Sato S."/>
            <person name="Kaneko T."/>
            <person name="Kotani H."/>
            <person name="Asamizu E."/>
            <person name="Miyajima N."/>
            <person name="Tabata S."/>
        </authorList>
    </citation>
    <scope>NUCLEOTIDE SEQUENCE [LARGE SCALE GENOMIC DNA]</scope>
    <source>
        <strain>cv. Columbia</strain>
    </source>
</reference>
<reference key="2">
    <citation type="journal article" date="2000" name="Nature">
        <title>Sequence and analysis of chromosome 5 of the plant Arabidopsis thaliana.</title>
        <authorList>
            <person name="Tabata S."/>
            <person name="Kaneko T."/>
            <person name="Nakamura Y."/>
            <person name="Kotani H."/>
            <person name="Kato T."/>
            <person name="Asamizu E."/>
            <person name="Miyajima N."/>
            <person name="Sasamoto S."/>
            <person name="Kimura T."/>
            <person name="Hosouchi T."/>
            <person name="Kawashima K."/>
            <person name="Kohara M."/>
            <person name="Matsumoto M."/>
            <person name="Matsuno A."/>
            <person name="Muraki A."/>
            <person name="Nakayama S."/>
            <person name="Nakazaki N."/>
            <person name="Naruo K."/>
            <person name="Okumura S."/>
            <person name="Shinpo S."/>
            <person name="Takeuchi C."/>
            <person name="Wada T."/>
            <person name="Watanabe A."/>
            <person name="Yamada M."/>
            <person name="Yasuda M."/>
            <person name="Sato S."/>
            <person name="de la Bastide M."/>
            <person name="Huang E."/>
            <person name="Spiegel L."/>
            <person name="Gnoj L."/>
            <person name="O'Shaughnessy A."/>
            <person name="Preston R."/>
            <person name="Habermann K."/>
            <person name="Murray J."/>
            <person name="Johnson D."/>
            <person name="Rohlfing T."/>
            <person name="Nelson J."/>
            <person name="Stoneking T."/>
            <person name="Pepin K."/>
            <person name="Spieth J."/>
            <person name="Sekhon M."/>
            <person name="Armstrong J."/>
            <person name="Becker M."/>
            <person name="Belter E."/>
            <person name="Cordum H."/>
            <person name="Cordes M."/>
            <person name="Courtney L."/>
            <person name="Courtney W."/>
            <person name="Dante M."/>
            <person name="Du H."/>
            <person name="Edwards J."/>
            <person name="Fryman J."/>
            <person name="Haakensen B."/>
            <person name="Lamar E."/>
            <person name="Latreille P."/>
            <person name="Leonard S."/>
            <person name="Meyer R."/>
            <person name="Mulvaney E."/>
            <person name="Ozersky P."/>
            <person name="Riley A."/>
            <person name="Strowmatt C."/>
            <person name="Wagner-McPherson C."/>
            <person name="Wollam A."/>
            <person name="Yoakum M."/>
            <person name="Bell M."/>
            <person name="Dedhia N."/>
            <person name="Parnell L."/>
            <person name="Shah R."/>
            <person name="Rodriguez M."/>
            <person name="Hoon See L."/>
            <person name="Vil D."/>
            <person name="Baker J."/>
            <person name="Kirchoff K."/>
            <person name="Toth K."/>
            <person name="King L."/>
            <person name="Bahret A."/>
            <person name="Miller B."/>
            <person name="Marra M.A."/>
            <person name="Martienssen R."/>
            <person name="McCombie W.R."/>
            <person name="Wilson R.K."/>
            <person name="Murphy G."/>
            <person name="Bancroft I."/>
            <person name="Volckaert G."/>
            <person name="Wambutt R."/>
            <person name="Duesterhoeft A."/>
            <person name="Stiekema W."/>
            <person name="Pohl T."/>
            <person name="Entian K.-D."/>
            <person name="Terryn N."/>
            <person name="Hartley N."/>
            <person name="Bent E."/>
            <person name="Johnson S."/>
            <person name="Langham S.-A."/>
            <person name="McCullagh B."/>
            <person name="Robben J."/>
            <person name="Grymonprez B."/>
            <person name="Zimmermann W."/>
            <person name="Ramsperger U."/>
            <person name="Wedler H."/>
            <person name="Balke K."/>
            <person name="Wedler E."/>
            <person name="Peters S."/>
            <person name="van Staveren M."/>
            <person name="Dirkse W."/>
            <person name="Mooijman P."/>
            <person name="Klein Lankhorst R."/>
            <person name="Weitzenegger T."/>
            <person name="Bothe G."/>
            <person name="Rose M."/>
            <person name="Hauf J."/>
            <person name="Berneiser S."/>
            <person name="Hempel S."/>
            <person name="Feldpausch M."/>
            <person name="Lamberth S."/>
            <person name="Villarroel R."/>
            <person name="Gielen J."/>
            <person name="Ardiles W."/>
            <person name="Bents O."/>
            <person name="Lemcke K."/>
            <person name="Kolesov G."/>
            <person name="Mayer K.F.X."/>
            <person name="Rudd S."/>
            <person name="Schoof H."/>
            <person name="Schueller C."/>
            <person name="Zaccaria P."/>
            <person name="Mewes H.-W."/>
            <person name="Bevan M."/>
            <person name="Fransz P.F."/>
        </authorList>
    </citation>
    <scope>NUCLEOTIDE SEQUENCE [LARGE SCALE GENOMIC DNA] OF 1-883</scope>
    <source>
        <strain>cv. Columbia</strain>
    </source>
</reference>
<reference key="3">
    <citation type="journal article" date="2017" name="Plant J.">
        <title>Araport11: a complete reannotation of the Arabidopsis thaliana reference genome.</title>
        <authorList>
            <person name="Cheng C.Y."/>
            <person name="Krishnakumar V."/>
            <person name="Chan A.P."/>
            <person name="Thibaud-Nissen F."/>
            <person name="Schobel S."/>
            <person name="Town C.D."/>
        </authorList>
    </citation>
    <scope>GENOME REANNOTATION</scope>
    <source>
        <strain>cv. Columbia</strain>
    </source>
</reference>
<reference key="4">
    <citation type="journal article" date="2003" name="Science">
        <title>Empirical analysis of transcriptional activity in the Arabidopsis genome.</title>
        <authorList>
            <person name="Yamada K."/>
            <person name="Lim J."/>
            <person name="Dale J.M."/>
            <person name="Chen H."/>
            <person name="Shinn P."/>
            <person name="Palm C.J."/>
            <person name="Southwick A.M."/>
            <person name="Wu H.C."/>
            <person name="Kim C.J."/>
            <person name="Nguyen M."/>
            <person name="Pham P.K."/>
            <person name="Cheuk R.F."/>
            <person name="Karlin-Newmann G."/>
            <person name="Liu S.X."/>
            <person name="Lam B."/>
            <person name="Sakano H."/>
            <person name="Wu T."/>
            <person name="Yu G."/>
            <person name="Miranda M."/>
            <person name="Quach H.L."/>
            <person name="Tripp M."/>
            <person name="Chang C.H."/>
            <person name="Lee J.M."/>
            <person name="Toriumi M.J."/>
            <person name="Chan M.M."/>
            <person name="Tang C.C."/>
            <person name="Onodera C.S."/>
            <person name="Deng J.M."/>
            <person name="Akiyama K."/>
            <person name="Ansari Y."/>
            <person name="Arakawa T."/>
            <person name="Banh J."/>
            <person name="Banno F."/>
            <person name="Bowser L."/>
            <person name="Brooks S.Y."/>
            <person name="Carninci P."/>
            <person name="Chao Q."/>
            <person name="Choy N."/>
            <person name="Enju A."/>
            <person name="Goldsmith A.D."/>
            <person name="Gurjal M."/>
            <person name="Hansen N.F."/>
            <person name="Hayashizaki Y."/>
            <person name="Johnson-Hopson C."/>
            <person name="Hsuan V.W."/>
            <person name="Iida K."/>
            <person name="Karnes M."/>
            <person name="Khan S."/>
            <person name="Koesema E."/>
            <person name="Ishida J."/>
            <person name="Jiang P.X."/>
            <person name="Jones T."/>
            <person name="Kawai J."/>
            <person name="Kamiya A."/>
            <person name="Meyers C."/>
            <person name="Nakajima M."/>
            <person name="Narusaka M."/>
            <person name="Seki M."/>
            <person name="Sakurai T."/>
            <person name="Satou M."/>
            <person name="Tamse R."/>
            <person name="Vaysberg M."/>
            <person name="Wallender E.K."/>
            <person name="Wong C."/>
            <person name="Yamamura Y."/>
            <person name="Yuan S."/>
            <person name="Shinozaki K."/>
            <person name="Davis R.W."/>
            <person name="Theologis A."/>
            <person name="Ecker J.R."/>
        </authorList>
    </citation>
    <scope>NUCLEOTIDE SEQUENCE [LARGE SCALE MRNA]</scope>
    <source>
        <strain>cv. Columbia</strain>
    </source>
</reference>
<reference key="5">
    <citation type="submission" date="2006-07" db="EMBL/GenBank/DDBJ databases">
        <title>Large-scale analysis of RIKEN Arabidopsis full-length (RAFL) cDNAs.</title>
        <authorList>
            <person name="Totoki Y."/>
            <person name="Seki M."/>
            <person name="Ishida J."/>
            <person name="Nakajima M."/>
            <person name="Enju A."/>
            <person name="Kamiya A."/>
            <person name="Narusaka M."/>
            <person name="Shin-i T."/>
            <person name="Nakagawa M."/>
            <person name="Sakamoto N."/>
            <person name="Oishi K."/>
            <person name="Kohara Y."/>
            <person name="Kobayashi M."/>
            <person name="Toyoda A."/>
            <person name="Sakaki Y."/>
            <person name="Sakurai T."/>
            <person name="Iida K."/>
            <person name="Akiyama K."/>
            <person name="Satou M."/>
            <person name="Toyoda T."/>
            <person name="Konagaya A."/>
            <person name="Carninci P."/>
            <person name="Kawai J."/>
            <person name="Hayashizaki Y."/>
            <person name="Shinozaki K."/>
        </authorList>
    </citation>
    <scope>NUCLEOTIDE SEQUENCE [LARGE SCALE MRNA]</scope>
    <source>
        <strain>cv. Columbia</strain>
    </source>
</reference>
<reference key="6">
    <citation type="journal article" date="2004" name="Plant Cell">
        <title>Genome-wide analysis of Arabidopsis pentatricopeptide repeat proteins reveals their essential role in organelle biogenesis.</title>
        <authorList>
            <person name="Lurin C."/>
            <person name="Andres C."/>
            <person name="Aubourg S."/>
            <person name="Bellaoui M."/>
            <person name="Bitton F."/>
            <person name="Bruyere C."/>
            <person name="Caboche M."/>
            <person name="Debast C."/>
            <person name="Gualberto J."/>
            <person name="Hoffmann B."/>
            <person name="Lecharny A."/>
            <person name="Le Ret M."/>
            <person name="Martin-Magniette M.-L."/>
            <person name="Mireau H."/>
            <person name="Peeters N."/>
            <person name="Renou J.-P."/>
            <person name="Szurek B."/>
            <person name="Taconnat L."/>
            <person name="Small I."/>
        </authorList>
    </citation>
    <scope>GENE FAMILY</scope>
</reference>
<reference key="7">
    <citation type="journal article" date="2006" name="Plant Cell">
        <title>A pentatricopeptide repeat protein facilitates the trans-splicing of the maize chloroplast rps12 pre-mRNA.</title>
        <authorList>
            <person name="Schmitz-Linneweber C."/>
            <person name="Williams-Carrier R.E."/>
            <person name="Williams-Voelker P.M."/>
            <person name="Kroeger T.S."/>
            <person name="Vichas A."/>
            <person name="Barkan A."/>
        </authorList>
    </citation>
    <scope>FUNCTION</scope>
</reference>
<reference key="8">
    <citation type="journal article" date="2008" name="PLoS ONE">
        <title>Sorting signals, N-terminal modifications and abundance of the chloroplast proteome.</title>
        <authorList>
            <person name="Zybailov B."/>
            <person name="Rutschow H."/>
            <person name="Friso G."/>
            <person name="Rudella A."/>
            <person name="Emanuelsson O."/>
            <person name="Sun Q."/>
            <person name="van Wijk K.J."/>
        </authorList>
    </citation>
    <scope>IDENTIFICATION BY MASS SPECTROMETRY</scope>
    <scope>SUBCELLULAR LOCATION [LARGE SCALE ANALYSIS]</scope>
</reference>
<gene>
    <name type="primary">PPR4</name>
    <name type="ordered locus">At5g04810</name>
    <name type="ORF">MUK11.13</name>
    <name type="ORF">T1E3_170</name>
</gene>
<organism>
    <name type="scientific">Arabidopsis thaliana</name>
    <name type="common">Mouse-ear cress</name>
    <dbReference type="NCBI Taxonomy" id="3702"/>
    <lineage>
        <taxon>Eukaryota</taxon>
        <taxon>Viridiplantae</taxon>
        <taxon>Streptophyta</taxon>
        <taxon>Embryophyta</taxon>
        <taxon>Tracheophyta</taxon>
        <taxon>Spermatophyta</taxon>
        <taxon>Magnoliopsida</taxon>
        <taxon>eudicotyledons</taxon>
        <taxon>Gunneridae</taxon>
        <taxon>Pentapetalae</taxon>
        <taxon>rosids</taxon>
        <taxon>malvids</taxon>
        <taxon>Brassicales</taxon>
        <taxon>Brassicaceae</taxon>
        <taxon>Camelineae</taxon>
        <taxon>Arabidopsis</taxon>
    </lineage>
</organism>
<keyword id="KW-0150">Chloroplast</keyword>
<keyword id="KW-0934">Plastid</keyword>
<keyword id="KW-1185">Reference proteome</keyword>
<keyword id="KW-0677">Repeat</keyword>
<keyword id="KW-0694">RNA-binding</keyword>
<keyword id="KW-0809">Transit peptide</keyword>